<proteinExistence type="evidence at protein level"/>
<name>GLCM1_LAMGL</name>
<comment type="similarity">
    <text evidence="2">Belongs to the PP3/GlyCAM-1 family.</text>
</comment>
<gene>
    <name type="primary">GLYCAM1</name>
</gene>
<keyword id="KW-0903">Direct protein sequencing</keyword>
<evidence type="ECO:0000303" key="1">
    <source>
    </source>
</evidence>
<evidence type="ECO:0000305" key="2"/>
<organism evidence="2">
    <name type="scientific">Lama glama</name>
    <name type="common">Llama</name>
    <dbReference type="NCBI Taxonomy" id="9844"/>
    <lineage>
        <taxon>Eukaryota</taxon>
        <taxon>Metazoa</taxon>
        <taxon>Chordata</taxon>
        <taxon>Craniata</taxon>
        <taxon>Vertebrata</taxon>
        <taxon>Euteleostomi</taxon>
        <taxon>Mammalia</taxon>
        <taxon>Eutheria</taxon>
        <taxon>Laurasiatheria</taxon>
        <taxon>Artiodactyla</taxon>
        <taxon>Tylopoda</taxon>
        <taxon>Camelidae</taxon>
        <taxon>Lama</taxon>
    </lineage>
</organism>
<accession>P83315</accession>
<feature type="chain" id="PRO_0000217759" description="Glycosylation-dependent cell adhesion molecule 1">
    <location>
        <begin position="1"/>
        <end position="18" status="greater than"/>
    </location>
</feature>
<feature type="non-terminal residue" evidence="1">
    <location>
        <position position="18"/>
    </location>
</feature>
<reference evidence="2" key="1">
    <citation type="journal article" date="1999" name="J. Dairy Sci.">
        <title>Alternative splicing of lactophorin mRNA from lactating mammary gland of the camel (Camelus dromedarius).</title>
        <authorList>
            <person name="Kappeler S."/>
            <person name="Farah Z."/>
            <person name="Puhan Z."/>
        </authorList>
    </citation>
    <scope>PROTEIN SEQUENCE</scope>
</reference>
<dbReference type="GO" id="GO:0005576">
    <property type="term" value="C:extracellular region"/>
    <property type="evidence" value="ECO:0000250"/>
    <property type="project" value="UniProtKB"/>
</dbReference>
<protein>
    <recommendedName>
        <fullName>Glycosylation-dependent cell adhesion molecule 1</fullName>
        <shortName>GlyCAM-1</shortName>
    </recommendedName>
    <alternativeName>
        <fullName>Lactophorin</fullName>
    </alternativeName>
    <alternativeName>
        <fullName>Whey protein</fullName>
    </alternativeName>
</protein>
<sequence>SLVSLNEPKDEIYMESQP</sequence>